<keyword id="KW-0002">3D-structure</keyword>
<keyword id="KW-0903">Direct protein sequencing</keyword>
<keyword id="KW-1015">Disulfide bond</keyword>
<keyword id="KW-0325">Glycoprotein</keyword>
<keyword id="KW-0378">Hydrolase</keyword>
<keyword id="KW-1185">Reference proteome</keyword>
<keyword id="KW-0964">Secreted</keyword>
<keyword id="KW-0719">Serine esterase</keyword>
<keyword id="KW-0732">Signal</keyword>
<accession>P08171</accession>
<accession>P91646</accession>
<accession>P91647</accession>
<accession>P91648</accession>
<accession>P91649</accession>
<accession>P91650</accession>
<accession>P92173</accession>
<accession>P92195</accession>
<accession>P92200</accession>
<accession>Q867G7</accession>
<accession>Q867V2</accession>
<accession>Q867Y9</accession>
<accession>Q868B8</accession>
<accession>Q86CX4</accession>
<accession>Q86CX5</accession>
<accession>Q86CX6</accession>
<accession>Q86CX7</accession>
<accession>Q86CX8</accession>
<accession>Q86CX9</accession>
<accession>Q86CY0</accession>
<accession>Q86CY1</accession>
<accession>Q86CY2</accession>
<accession>Q86CY3</accession>
<accession>Q86CY4</accession>
<accession>Q86CY5</accession>
<accession>Q86CY6</accession>
<accession>Q86CY7</accession>
<accession>Q8SWT4</accession>
<accession>Q9U797</accession>
<accession>Q9U798</accession>
<accession>Q9U799</accession>
<accession>Q9U7A0</accession>
<accession>Q9V3U8</accession>
<accession>Q9XTN6</accession>
<proteinExistence type="evidence at protein level"/>
<sequence length="544" mass="61125">MNYVGLGLIIVLSCLWLGSNASDTDDPLLVQLPQGKLRGRDNGSYYSYESIPYAEPPTGDLRFEAPEPYKQKWSDIFDATKTPVACLQWDQFTPGANKLVGEEDCLTVSVYKPKNSKRNSFPVVAHIHGGAFMFGAAWQNGHENVMREGKFILVKISYRLGPLGFVSTGDRDLPGNYGLKDQRLALKWIKQNIASFGGEPQNVLLVGHSAGGASVHLQMLREDFGQLARAAFSFSGNALDPWVIQKGARGRAFELGRNVGCESAEDSTSLKKCLKSKPASELVTAVRKFLIFSYVPFAPFSPVLEPSDAPDAIITQDPRDVIKSGKFGQVPWAVSYVTEDGGYNAALLLKERKSGIVIDDLNERWLELAPYLLFYRDTKTKKDMDDYSRKIKQEYIGNQRFDIESYSELQRLFTDILFKNSTQESLDLHRKYGKSPAYAYVYDNPAEKGIAQVLANRTDYDFGTVHGDDYFLIFENFVRDVEMRPDEQIISRNFINMLADFASSDNGSLKYGECDFKDNVGSEKFQLLAIYIDGCQNRQHVEFP</sequence>
<reference key="1">
    <citation type="journal article" date="1990" name="Mol. Biol. Evol.">
        <title>Molecular analysis of duplicated esterase genes in Drosophila melanogaster.</title>
        <authorList>
            <person name="Collet C."/>
            <person name="Nielsen K.M."/>
            <person name="Russell R.J."/>
            <person name="Karl M."/>
            <person name="Oakeshott J.G."/>
            <person name="Richmond R.C."/>
        </authorList>
    </citation>
    <scope>NUCLEOTIDE SEQUENCE [GENOMIC DNA]</scope>
    <source>
        <strain>Canton-S</strain>
    </source>
</reference>
<reference key="2">
    <citation type="journal article" date="1989" name="Proc. Natl. Acad. Sci. U.S.A.">
        <title>Amino acid polymorphisms for esterase-6 in Drosophila melanogaster.</title>
        <authorList>
            <person name="Cooke P.H."/>
            <person name="Oakeshott J.G."/>
        </authorList>
    </citation>
    <scope>NUCLEOTIDE SEQUENCE [GENOMIC DNA]</scope>
</reference>
<reference key="3">
    <citation type="journal article" date="1987" name="Proc. Natl. Acad. Sci. U.S.A.">
        <title>Molecular cloning and characterization of esterase-6, a serine hydrolase of Drosophila.</title>
        <authorList>
            <person name="Oakeshott J.G."/>
            <person name="Collet C."/>
            <person name="Phillis R.W."/>
            <person name="Nielsen K.M."/>
            <person name="Russell R.J."/>
            <person name="Chambers G.K."/>
            <person name="Ross V."/>
            <person name="Richmond R.C."/>
        </authorList>
    </citation>
    <scope>NUCLEOTIDE SEQUENCE [MRNA]</scope>
    <scope>PARTIAL PROTEIN SEQUENCE</scope>
</reference>
<reference key="4">
    <citation type="journal article" date="1999" name="Genetics">
        <title>Molecular evolution of two linked genes, Est-6 and Sod, in Drosophila melanogaster.</title>
        <authorList>
            <person name="Balakirev E.S."/>
            <person name="Balakirev E.I."/>
            <person name="Rodriguez-Trelles F."/>
            <person name="Ayala F.J."/>
        </authorList>
    </citation>
    <scope>NUCLEOTIDE SEQUENCE [GENOMIC DNA]</scope>
    <source>
        <strain>174F</strain>
        <strain>357F</strain>
        <strain>377F</strain>
        <strain>510S</strain>
        <strain>517S</strain>
        <strain>521S</strain>
        <strain>581F</strain>
        <strain>94F</strain>
    </source>
</reference>
<reference key="5">
    <citation type="journal article" date="2002" name="Gene">
        <title>Molecular evolution of the Est-6 gene in Drosophila melanogaster: contrasting patterns of DNA variability in adjacent functional regions.</title>
        <authorList>
            <person name="Balakirev E.S."/>
            <person name="Balakirev E.I."/>
            <person name="Ayala F.J."/>
        </authorList>
    </citation>
    <scope>NUCLEOTIDE SEQUENCE [GENOMIC DNA]</scope>
    <source>
        <strain>F-1461S</strain>
        <strain>F-274F</strain>
        <strain>F-517F</strain>
        <strain>F-531F</strain>
        <strain>F-611F</strain>
        <strain>F-775F</strain>
        <strain>F-96S</strain>
        <strain>S-114S</strain>
        <strain>S-1224F</strain>
        <strain>S-255S</strain>
        <strain>S-2588S</strain>
        <strain>S-26F</strain>
        <strain>S-438S</strain>
        <strain>S-483F</strain>
        <strain>S-498F</strain>
        <strain>S-501S</strain>
        <strain>S-521F</strain>
        <strain>S-549S</strain>
        <strain>S-565F</strain>
        <strain>S-5F</strain>
        <strain>S-968F</strain>
        <strain>US-255F</strain>
    </source>
</reference>
<reference key="6">
    <citation type="journal article" date="2003" name="Genetics">
        <title>Nucleotide variation of the Est-6 gene region in natural populations of Drosophila melanogaster.</title>
        <authorList>
            <person name="Balakirev E.S."/>
            <person name="Ayala F.J."/>
        </authorList>
    </citation>
    <scope>NUCLEOTIDE SEQUENCE [GENOMIC DNA]</scope>
    <source>
        <strain>Bar-F-77F</strain>
        <strain>Bar-F-79F</strain>
        <strain>Bar-F-7F</strain>
        <strain>Bar-F-93F</strain>
        <strain>Bar-F-96S</strain>
        <strain>Bar-S-119F</strain>
        <strain>Bar-S-158F</strain>
        <strain>Bar-S-19F</strain>
        <strain>Bar-S-24F</strain>
        <strain>Bar-S-44F</strain>
        <strain>Bar-S-48F</strain>
        <strain>Bar-S-60F</strain>
        <strain>Bar-S-78F</strain>
        <strain>Bar-S-80F</strain>
        <strain>Bar-S-86F</strain>
        <strain>Bar-S-89F</strain>
        <strain>Bar-S-95F</strain>
        <strain>Bar-S-99F</strain>
        <strain>Ven-S-10F</strain>
        <strain>Ven-S-11F</strain>
        <strain>Ven-S-12F</strain>
        <strain>Ven-S-13F</strain>
        <strain>Ven-S-14F</strain>
        <strain>Ven-S-15F</strain>
        <strain>Ven-S-16S</strain>
        <strain>Ven-S-17F</strain>
        <strain>Ven-S-18F</strain>
        <strain>Ven-S-1F</strain>
        <strain>Ven-S-20F</strain>
        <strain>Ven-S-21F</strain>
        <strain>Ven-S-22F</strain>
        <strain>Ven-S-23F</strain>
        <strain>Ven-S-2F</strain>
        <strain>Ven-S-3F</strain>
        <strain>Ven-S-4F</strain>
        <strain>Ven-S-5F</strain>
        <strain>Ven-S-7F</strain>
        <strain>Ven-S-8F</strain>
        <strain>Zim-F-H27</strain>
        <strain>Zim-F-H31</strain>
        <strain>Zim-F-S11</strain>
        <strain>Zim-F-S18</strain>
        <strain>Zim-F-S53</strain>
        <strain>Zim-S-44F</strain>
        <strain>Zim-S-H13</strain>
        <strain>Zim-S-H32</strain>
        <strain>Zim-S-S10</strain>
        <strain>Zim-S-S2</strain>
        <strain>Zim-S-S30</strain>
        <strain>Zim-S-S34</strain>
    </source>
</reference>
<reference key="7">
    <citation type="journal article" date="2000" name="Science">
        <title>The genome sequence of Drosophila melanogaster.</title>
        <authorList>
            <person name="Adams M.D."/>
            <person name="Celniker S.E."/>
            <person name="Holt R.A."/>
            <person name="Evans C.A."/>
            <person name="Gocayne J.D."/>
            <person name="Amanatides P.G."/>
            <person name="Scherer S.E."/>
            <person name="Li P.W."/>
            <person name="Hoskins R.A."/>
            <person name="Galle R.F."/>
            <person name="George R.A."/>
            <person name="Lewis S.E."/>
            <person name="Richards S."/>
            <person name="Ashburner M."/>
            <person name="Henderson S.N."/>
            <person name="Sutton G.G."/>
            <person name="Wortman J.R."/>
            <person name="Yandell M.D."/>
            <person name="Zhang Q."/>
            <person name="Chen L.X."/>
            <person name="Brandon R.C."/>
            <person name="Rogers Y.-H.C."/>
            <person name="Blazej R.G."/>
            <person name="Champe M."/>
            <person name="Pfeiffer B.D."/>
            <person name="Wan K.H."/>
            <person name="Doyle C."/>
            <person name="Baxter E.G."/>
            <person name="Helt G."/>
            <person name="Nelson C.R."/>
            <person name="Miklos G.L.G."/>
            <person name="Abril J.F."/>
            <person name="Agbayani A."/>
            <person name="An H.-J."/>
            <person name="Andrews-Pfannkoch C."/>
            <person name="Baldwin D."/>
            <person name="Ballew R.M."/>
            <person name="Basu A."/>
            <person name="Baxendale J."/>
            <person name="Bayraktaroglu L."/>
            <person name="Beasley E.M."/>
            <person name="Beeson K.Y."/>
            <person name="Benos P.V."/>
            <person name="Berman B.P."/>
            <person name="Bhandari D."/>
            <person name="Bolshakov S."/>
            <person name="Borkova D."/>
            <person name="Botchan M.R."/>
            <person name="Bouck J."/>
            <person name="Brokstein P."/>
            <person name="Brottier P."/>
            <person name="Burtis K.C."/>
            <person name="Busam D.A."/>
            <person name="Butler H."/>
            <person name="Cadieu E."/>
            <person name="Center A."/>
            <person name="Chandra I."/>
            <person name="Cherry J.M."/>
            <person name="Cawley S."/>
            <person name="Dahlke C."/>
            <person name="Davenport L.B."/>
            <person name="Davies P."/>
            <person name="de Pablos B."/>
            <person name="Delcher A."/>
            <person name="Deng Z."/>
            <person name="Mays A.D."/>
            <person name="Dew I."/>
            <person name="Dietz S.M."/>
            <person name="Dodson K."/>
            <person name="Doup L.E."/>
            <person name="Downes M."/>
            <person name="Dugan-Rocha S."/>
            <person name="Dunkov B.C."/>
            <person name="Dunn P."/>
            <person name="Durbin K.J."/>
            <person name="Evangelista C.C."/>
            <person name="Ferraz C."/>
            <person name="Ferriera S."/>
            <person name="Fleischmann W."/>
            <person name="Fosler C."/>
            <person name="Gabrielian A.E."/>
            <person name="Garg N.S."/>
            <person name="Gelbart W.M."/>
            <person name="Glasser K."/>
            <person name="Glodek A."/>
            <person name="Gong F."/>
            <person name="Gorrell J.H."/>
            <person name="Gu Z."/>
            <person name="Guan P."/>
            <person name="Harris M."/>
            <person name="Harris N.L."/>
            <person name="Harvey D.A."/>
            <person name="Heiman T.J."/>
            <person name="Hernandez J.R."/>
            <person name="Houck J."/>
            <person name="Hostin D."/>
            <person name="Houston K.A."/>
            <person name="Howland T.J."/>
            <person name="Wei M.-H."/>
            <person name="Ibegwam C."/>
            <person name="Jalali M."/>
            <person name="Kalush F."/>
            <person name="Karpen G.H."/>
            <person name="Ke Z."/>
            <person name="Kennison J.A."/>
            <person name="Ketchum K.A."/>
            <person name="Kimmel B.E."/>
            <person name="Kodira C.D."/>
            <person name="Kraft C.L."/>
            <person name="Kravitz S."/>
            <person name="Kulp D."/>
            <person name="Lai Z."/>
            <person name="Lasko P."/>
            <person name="Lei Y."/>
            <person name="Levitsky A.A."/>
            <person name="Li J.H."/>
            <person name="Li Z."/>
            <person name="Liang Y."/>
            <person name="Lin X."/>
            <person name="Liu X."/>
            <person name="Mattei B."/>
            <person name="McIntosh T.C."/>
            <person name="McLeod M.P."/>
            <person name="McPherson D."/>
            <person name="Merkulov G."/>
            <person name="Milshina N.V."/>
            <person name="Mobarry C."/>
            <person name="Morris J."/>
            <person name="Moshrefi A."/>
            <person name="Mount S.M."/>
            <person name="Moy M."/>
            <person name="Murphy B."/>
            <person name="Murphy L."/>
            <person name="Muzny D.M."/>
            <person name="Nelson D.L."/>
            <person name="Nelson D.R."/>
            <person name="Nelson K.A."/>
            <person name="Nixon K."/>
            <person name="Nusskern D.R."/>
            <person name="Pacleb J.M."/>
            <person name="Palazzolo M."/>
            <person name="Pittman G.S."/>
            <person name="Pan S."/>
            <person name="Pollard J."/>
            <person name="Puri V."/>
            <person name="Reese M.G."/>
            <person name="Reinert K."/>
            <person name="Remington K."/>
            <person name="Saunders R.D.C."/>
            <person name="Scheeler F."/>
            <person name="Shen H."/>
            <person name="Shue B.C."/>
            <person name="Siden-Kiamos I."/>
            <person name="Simpson M."/>
            <person name="Skupski M.P."/>
            <person name="Smith T.J."/>
            <person name="Spier E."/>
            <person name="Spradling A.C."/>
            <person name="Stapleton M."/>
            <person name="Strong R."/>
            <person name="Sun E."/>
            <person name="Svirskas R."/>
            <person name="Tector C."/>
            <person name="Turner R."/>
            <person name="Venter E."/>
            <person name="Wang A.H."/>
            <person name="Wang X."/>
            <person name="Wang Z.-Y."/>
            <person name="Wassarman D.A."/>
            <person name="Weinstock G.M."/>
            <person name="Weissenbach J."/>
            <person name="Williams S.M."/>
            <person name="Woodage T."/>
            <person name="Worley K.C."/>
            <person name="Wu D."/>
            <person name="Yang S."/>
            <person name="Yao Q.A."/>
            <person name="Ye J."/>
            <person name="Yeh R.-F."/>
            <person name="Zaveri J.S."/>
            <person name="Zhan M."/>
            <person name="Zhang G."/>
            <person name="Zhao Q."/>
            <person name="Zheng L."/>
            <person name="Zheng X.H."/>
            <person name="Zhong F.N."/>
            <person name="Zhong W."/>
            <person name="Zhou X."/>
            <person name="Zhu S.C."/>
            <person name="Zhu X."/>
            <person name="Smith H.O."/>
            <person name="Gibbs R.A."/>
            <person name="Myers E.W."/>
            <person name="Rubin G.M."/>
            <person name="Venter J.C."/>
        </authorList>
    </citation>
    <scope>NUCLEOTIDE SEQUENCE [LARGE SCALE GENOMIC DNA]</scope>
    <source>
        <strain>Berkeley</strain>
    </source>
</reference>
<reference key="8">
    <citation type="journal article" date="2002" name="Genome Biol.">
        <title>Annotation of the Drosophila melanogaster euchromatic genome: a systematic review.</title>
        <authorList>
            <person name="Misra S."/>
            <person name="Crosby M.A."/>
            <person name="Mungall C.J."/>
            <person name="Matthews B.B."/>
            <person name="Campbell K.S."/>
            <person name="Hradecky P."/>
            <person name="Huang Y."/>
            <person name="Kaminker J.S."/>
            <person name="Millburn G.H."/>
            <person name="Prochnik S.E."/>
            <person name="Smith C.D."/>
            <person name="Tupy J.L."/>
            <person name="Whitfield E.J."/>
            <person name="Bayraktaroglu L."/>
            <person name="Berman B.P."/>
            <person name="Bettencourt B.R."/>
            <person name="Celniker S.E."/>
            <person name="de Grey A.D.N.J."/>
            <person name="Drysdale R.A."/>
            <person name="Harris N.L."/>
            <person name="Richter J."/>
            <person name="Russo S."/>
            <person name="Schroeder A.J."/>
            <person name="Shu S.Q."/>
            <person name="Stapleton M."/>
            <person name="Yamada C."/>
            <person name="Ashburner M."/>
            <person name="Gelbart W.M."/>
            <person name="Rubin G.M."/>
            <person name="Lewis S.E."/>
        </authorList>
    </citation>
    <scope>GENOME REANNOTATION</scope>
    <source>
        <strain>Berkeley</strain>
    </source>
</reference>
<reference key="9">
    <citation type="journal article" date="2002" name="Genome Biol.">
        <title>A Drosophila full-length cDNA resource.</title>
        <authorList>
            <person name="Stapleton M."/>
            <person name="Carlson J.W."/>
            <person name="Brokstein P."/>
            <person name="Yu C."/>
            <person name="Champe M."/>
            <person name="George R.A."/>
            <person name="Guarin H."/>
            <person name="Kronmiller B."/>
            <person name="Pacleb J.M."/>
            <person name="Park S."/>
            <person name="Wan K.H."/>
            <person name="Rubin G.M."/>
            <person name="Celniker S.E."/>
        </authorList>
    </citation>
    <scope>NUCLEOTIDE SEQUENCE [LARGE SCALE MRNA]</scope>
    <source>
        <strain>Berkeley</strain>
        <tissue>Head</tissue>
    </source>
</reference>
<reference key="10">
    <citation type="journal article" date="1996" name="Genetics">
        <title>Contrasting histories of three gene regions associated with In(3L)Payne of Drosophila melanogaster.</title>
        <authorList>
            <person name="Hasson E."/>
            <person name="Eanes W.F."/>
        </authorList>
    </citation>
    <scope>NUCLEOTIDE SEQUENCE [GENOMIC DNA] OF 1-538</scope>
    <source>
        <strain>178.7</strain>
        <strain>709.6</strain>
        <strain>DPF-13</strain>
        <strain>DPF-2</strain>
        <strain>DPF-30</strain>
        <strain>DPF-46</strain>
        <strain>DPF-62</strain>
        <strain>DPF-77</strain>
        <strain>DPF-82.1</strain>
        <strain>EM-10</strain>
        <strain>MA-10.2</strain>
        <strain>MA-4.2</strain>
        <strain>MA-4.4</strain>
        <strain>VC-805</strain>
        <strain>VC-815</strain>
    </source>
</reference>
<reference key="11">
    <citation type="journal article" date="2007" name="Glycobiology">
        <title>Identification of N-glycosylated proteins from the central nervous system of Drosophila melanogaster.</title>
        <authorList>
            <person name="Koles K."/>
            <person name="Lim J.-M."/>
            <person name="Aoki K."/>
            <person name="Porterfield M."/>
            <person name="Tiemeyer M."/>
            <person name="Wells L."/>
            <person name="Panin V."/>
        </authorList>
    </citation>
    <scope>GLYCOSYLATION [LARGE SCALE ANALYSIS] AT ASN-42; ASN-420 AND ASN-456</scope>
    <scope>IDENTIFICATION BY MASS SPECTROMETRY</scope>
    <source>
        <strain>Oregon-R</strain>
        <tissue>Head</tissue>
    </source>
</reference>
<feature type="signal peptide">
    <location>
        <begin position="1"/>
        <end position="21"/>
    </location>
</feature>
<feature type="chain" id="PRO_0000008561" description="Esterase-6">
    <location>
        <begin position="22"/>
        <end position="544"/>
    </location>
</feature>
<feature type="active site" description="Acyl-ester intermediate" evidence="3">
    <location>
        <position position="209"/>
    </location>
</feature>
<feature type="active site" description="Charge relay system" evidence="1">
    <location>
        <position position="466"/>
    </location>
</feature>
<feature type="glycosylation site" description="N-linked (GlcNAc...) asparagine" evidence="4">
    <location>
        <position position="42"/>
    </location>
</feature>
<feature type="glycosylation site" description="N-linked (GlcNAc...) asparagine" evidence="4">
    <location>
        <position position="420"/>
    </location>
</feature>
<feature type="glycosylation site" description="N-linked (GlcNAc...) asparagine" evidence="4">
    <location>
        <position position="456"/>
    </location>
</feature>
<feature type="glycosylation site" description="N-linked (GlcNAc...) asparagine" evidence="2">
    <location>
        <position position="506"/>
    </location>
</feature>
<feature type="disulfide bond" evidence="1">
    <location>
        <begin position="86"/>
        <end position="105"/>
    </location>
</feature>
<feature type="disulfide bond" evidence="1">
    <location>
        <begin position="261"/>
        <end position="273"/>
    </location>
</feature>
<feature type="disulfide bond" evidence="2">
    <location>
        <begin position="514"/>
        <end position="535"/>
    </location>
</feature>
<feature type="sequence variant" description="In strain: 178.7, 357F, 517S, Bar-F-77F, Bar-F-79F, Bar-F-96S, DPF-13, DPF-30, DPF-82.1, EM-10, F-274F, F-517F, F-1461S, MA-4.4 and Zim-F-H31.">
    <original>I</original>
    <variation>T</variation>
    <location>
        <position position="10"/>
    </location>
</feature>
<feature type="sequence variant" description="In strain: 178.7, 377F, 357F, 517S, Bar-F-79F, DPF-13, DPF-30, DPF-82.1, EM-10, F-274F, F-517F, F-775F, F-1461S, MA-4.4, Ven-S-13F, Zim-F-H27, Zim-F-H31, Zim-F-S11, Zim-F-S18, Zim-F-S53, Zim-S-S2, Zim-S-S30 and Zim-S-S34.">
    <original>T</original>
    <variation>I</variation>
    <location>
        <position position="24"/>
    </location>
</feature>
<feature type="sequence variant" description="In strain: Zim-S-H13.">
    <original>P</original>
    <variation>S</variation>
    <location>
        <position position="33"/>
    </location>
</feature>
<feature type="sequence variant" description="In strain: 178.7, 357F, 517S, Bar-F-77F, Bar-F-79F, Bar-F-96S, DPF-13, DPF-30, DPF-82.1, EM-10, F-274F, F-1461S, MA-4.2, VC-805, Ven-S-1F, Ven-S-2F, Ven-S-3F, Ven-S-11F, Ven-S-21F, Zim-F-H31, Zim-F-S18 and Zim-S-S10.">
    <original>T</original>
    <variation>I</variation>
    <location>
        <position position="58"/>
    </location>
</feature>
<feature type="sequence variant" description="In strain: DPF-2 and 521S.">
    <original>S</original>
    <variation>T</variation>
    <location>
        <position position="120"/>
    </location>
</feature>
<feature type="sequence variant" description="In strain: 178.7, 357F, 517S, 709.6, Bar-F-7F, Bar-F-77F, Bar-F-79F, Bar-F-93F, Bar-F-96S, DPF-13, DPF-30, DPF-46, DPF-77, DPF-82.1, EM-10, F-96S, F-274F, F-517F, F-531F, F-611F, F-775F, F-1461S, MA-4.2, Zim-F-H27, Zim-F-H31, Zim-F-S11, Zim-F-S18 and Zim-F-S53.">
    <original>N</original>
    <variation>D</variation>
    <location>
        <position position="258"/>
    </location>
</feature>
<feature type="sequence variant" description="In strain: 174F, 178.7, 357F, 517S, 709.6, Bar-F-7F, Bar-F-77F, Bar-F-79F, Bar-F-93F, Bar-F-96S, Bar-S-24F, Bar-S-60F, Bar-S-78F, Bar-S-89F, Bar-S-99F, Bar-S-95F, DPF-13, DPF-30, DPF-46, DPF-77, DPF-82.1, EM-10, F-96S, F-274F, F-517F, F-531F, S-549S, F-611F, F-775F, F-1461S, MA-4.2, S-114S, S-2588S, VC-815, Ven-S-1F, Ven-S-2F, Ven-S-3F, Ven-S-4F, Ven-S-11F, Ven-S-21F, Zim-F-H27, Zim-F-H31, Zim-F-S11, Zim-F-S18, Zim-F-S53, Zim-S-S34 and Zim-S-44F.">
    <original>T</original>
    <variation>A</variation>
    <location>
        <position position="268"/>
    </location>
</feature>
<feature type="sequence variant" description="In strain: VC-805.">
    <original>S</original>
    <variation>P</variation>
    <location>
        <position position="276"/>
    </location>
</feature>
<feature type="sequence variant" description="In strain: Ven-S-13F.">
    <original>A</original>
    <variation>V</variation>
    <location>
        <position position="309"/>
    </location>
</feature>
<feature type="sequence variant" description="In strain: F-775F.">
    <original>I</original>
    <variation>T</variation>
    <location>
        <position position="356"/>
    </location>
</feature>
<feature type="sequence variant" description="In strain: F-775F.">
    <original>E</original>
    <variation>D</variation>
    <location>
        <position position="363"/>
    </location>
</feature>
<feature type="sequence variant" description="In strain: F-775F.">
    <original>Y</original>
    <variation>H</variation>
    <location>
        <position position="371"/>
    </location>
</feature>
<feature type="sequence variant" description="In strain: Zim-S-S34.">
    <original>R</original>
    <variation>G</variation>
    <location>
        <position position="376"/>
    </location>
</feature>
<feature type="sequence variant" description="In strain: Ven-S-13F and Zim-F-S18.">
    <original>E</original>
    <variation>D</variation>
    <location>
        <position position="394"/>
    </location>
</feature>
<feature type="sequence variant" description="In strain: US-255F.">
    <original>G</original>
    <variation>R</variation>
    <location>
        <position position="397"/>
    </location>
</feature>
<feature type="sequence variant" description="In strain: 357F, 517S, Bar-F-7F, Bar-F-77F, Bar-F-79F, Bar-F-93F, Bar-F-96S, DPF-13, DPF-30, F-96S, F-274F, F-517F, F-1461S, S-114S, S-549S, S-2588S, VC-805, Ven-S-4F, Zim-S-S2, Zim-S-S30 and Zim-S-S34.">
    <original>L</original>
    <variation>V</variation>
    <location>
        <position position="409"/>
    </location>
</feature>
<feature type="sequence variant" description="In strain: Zim-F-S53.">
    <original>V</original>
    <variation>I</variation>
    <location>
        <position position="441"/>
    </location>
</feature>
<feature type="sequence variant" description="In strain: 94F, 174F, Bar-S-24F, Bar-S-89F, Bar-S-99F, Bar-S-95F, Bar-S-60F, F-531F, F-611F, MA-4.2, Zim-F-H27, Zim-F-S18 and Zim-S-44F.">
    <original>R</original>
    <variation>K</variation>
    <location>
        <position position="492"/>
    </location>
</feature>
<feature type="sequence variant" description="In strain: Zim-F-S18, Zim-S-H32 and Zim-S-S2.">
    <original>D</original>
    <variation>N</variation>
    <location>
        <position position="500"/>
    </location>
</feature>
<feature type="sequence variant" description="In strain: 357F, 517S, Bar-F-79F, Bar-S-78F, DPF-13, DPF-30, F-96S, F-517F, F-1461S, MA-4.2, VC-805, Ven-S-1F, Ven-S-2F, Ven-S-3F, Ven-S-11F, Ven-S-21F and Zim-F-S11.">
    <original>S</original>
    <variation>A</variation>
    <location>
        <position position="508"/>
    </location>
</feature>
<feature type="sequence conflict" description="In Ref. 3; AAA28517." evidence="5" ref="3">
    <original>N</original>
    <variation>S</variation>
    <location>
        <position position="519"/>
    </location>
</feature>
<feature type="sequence conflict" description="In Ref. 3; AAA28517." evidence="5" ref="3">
    <original>GCQNRQHVEFP</original>
    <variation>AARIGSMWNFRKLHE</variation>
    <location>
        <begin position="534"/>
        <end position="544"/>
    </location>
</feature>
<feature type="turn" evidence="6">
    <location>
        <begin position="26"/>
        <end position="28"/>
    </location>
</feature>
<feature type="strand" evidence="6">
    <location>
        <begin position="29"/>
        <end position="32"/>
    </location>
</feature>
<feature type="strand" evidence="6">
    <location>
        <begin position="35"/>
        <end position="38"/>
    </location>
</feature>
<feature type="strand" evidence="6">
    <location>
        <begin position="43"/>
        <end position="52"/>
    </location>
</feature>
<feature type="helix" evidence="6">
    <location>
        <begin position="59"/>
        <end position="61"/>
    </location>
</feature>
<feature type="strand" evidence="6">
    <location>
        <begin position="86"/>
        <end position="89"/>
    </location>
</feature>
<feature type="strand" evidence="6">
    <location>
        <begin position="99"/>
        <end position="103"/>
    </location>
</feature>
<feature type="strand" evidence="6">
    <location>
        <begin position="107"/>
        <end position="113"/>
    </location>
</feature>
<feature type="strand" evidence="6">
    <location>
        <begin position="121"/>
        <end position="127"/>
    </location>
</feature>
<feature type="turn" evidence="6">
    <location>
        <begin position="131"/>
        <end position="133"/>
    </location>
</feature>
<feature type="helix" evidence="6">
    <location>
        <begin position="137"/>
        <end position="139"/>
    </location>
</feature>
<feature type="helix" evidence="6">
    <location>
        <begin position="143"/>
        <end position="148"/>
    </location>
</feature>
<feature type="strand" evidence="6">
    <location>
        <begin position="152"/>
        <end position="156"/>
    </location>
</feature>
<feature type="helix" evidence="6">
    <location>
        <begin position="161"/>
        <end position="165"/>
    </location>
</feature>
<feature type="helix" evidence="6">
    <location>
        <begin position="177"/>
        <end position="186"/>
    </location>
</feature>
<feature type="helix" evidence="6">
    <location>
        <begin position="193"/>
        <end position="196"/>
    </location>
</feature>
<feature type="strand" evidence="6">
    <location>
        <begin position="198"/>
        <end position="208"/>
    </location>
</feature>
<feature type="helix" evidence="6">
    <location>
        <begin position="210"/>
        <end position="219"/>
    </location>
</feature>
<feature type="helix" evidence="6">
    <location>
        <begin position="224"/>
        <end position="226"/>
    </location>
</feature>
<feature type="strand" evidence="6">
    <location>
        <begin position="231"/>
        <end position="235"/>
    </location>
</feature>
<feature type="turn" evidence="6">
    <location>
        <begin position="241"/>
        <end position="243"/>
    </location>
</feature>
<feature type="helix" evidence="6">
    <location>
        <begin position="248"/>
        <end position="258"/>
    </location>
</feature>
<feature type="helix" evidence="6">
    <location>
        <begin position="267"/>
        <end position="270"/>
    </location>
</feature>
<feature type="helix" evidence="6">
    <location>
        <begin position="279"/>
        <end position="284"/>
    </location>
</feature>
<feature type="helix" evidence="6">
    <location>
        <begin position="285"/>
        <end position="287"/>
    </location>
</feature>
<feature type="strand" evidence="6">
    <location>
        <begin position="291"/>
        <end position="294"/>
    </location>
</feature>
<feature type="helix" evidence="6">
    <location>
        <begin position="318"/>
        <end position="322"/>
    </location>
</feature>
<feature type="strand" evidence="6">
    <location>
        <begin position="332"/>
        <end position="337"/>
    </location>
</feature>
<feature type="helix" evidence="6">
    <location>
        <begin position="342"/>
        <end position="345"/>
    </location>
</feature>
<feature type="helix" evidence="6">
    <location>
        <begin position="346"/>
        <end position="349"/>
    </location>
</feature>
<feature type="helix" evidence="6">
    <location>
        <begin position="357"/>
        <end position="360"/>
    </location>
</feature>
<feature type="helix" evidence="6">
    <location>
        <begin position="361"/>
        <end position="372"/>
    </location>
</feature>
<feature type="helix" evidence="6">
    <location>
        <begin position="384"/>
        <end position="389"/>
    </location>
</feature>
<feature type="turn" evidence="6">
    <location>
        <begin position="394"/>
        <end position="398"/>
    </location>
</feature>
<feature type="turn" evidence="6">
    <location>
        <begin position="403"/>
        <end position="405"/>
    </location>
</feature>
<feature type="helix" evidence="6">
    <location>
        <begin position="406"/>
        <end position="417"/>
    </location>
</feature>
<feature type="helix" evidence="6">
    <location>
        <begin position="419"/>
        <end position="430"/>
    </location>
</feature>
<feature type="strand" evidence="6">
    <location>
        <begin position="437"/>
        <end position="443"/>
    </location>
</feature>
<feature type="helix" evidence="6">
    <location>
        <begin position="450"/>
        <end position="455"/>
    </location>
</feature>
<feature type="strand" evidence="6">
    <location>
        <begin position="458"/>
        <end position="460"/>
    </location>
</feature>
<feature type="turn" evidence="6">
    <location>
        <begin position="466"/>
        <end position="469"/>
    </location>
</feature>
<feature type="helix" evidence="6">
    <location>
        <begin position="470"/>
        <end position="473"/>
    </location>
</feature>
<feature type="strand" evidence="6">
    <location>
        <begin position="477"/>
        <end position="479"/>
    </location>
</feature>
<feature type="helix" evidence="6">
    <location>
        <begin position="485"/>
        <end position="503"/>
    </location>
</feature>
<feature type="strand" evidence="6">
    <location>
        <begin position="526"/>
        <end position="531"/>
    </location>
</feature>
<feature type="strand" evidence="6">
    <location>
        <begin position="534"/>
        <end position="539"/>
    </location>
</feature>
<gene>
    <name type="primary">Est-6</name>
    <name type="synonym">EST6</name>
    <name type="ORF">CG6917</name>
</gene>
<protein>
    <recommendedName>
        <fullName>Esterase-6</fullName>
        <shortName>Est-6</shortName>
        <ecNumber>3.1.1.1</ecNumber>
    </recommendedName>
    <alternativeName>
        <fullName>Carboxylic-ester hydrolase 6</fullName>
        <shortName>Carboxylesterase-6</shortName>
    </alternativeName>
</protein>
<comment type="function">
    <text>Transferred from the ejaculatory bulbs of males to the female genitals upon copulation, plays an important role in the reproductive biology.</text>
</comment>
<comment type="catalytic activity">
    <reaction evidence="3">
        <text>a carboxylic ester + H2O = an alcohol + a carboxylate + H(+)</text>
        <dbReference type="Rhea" id="RHEA:21164"/>
        <dbReference type="ChEBI" id="CHEBI:15377"/>
        <dbReference type="ChEBI" id="CHEBI:15378"/>
        <dbReference type="ChEBI" id="CHEBI:29067"/>
        <dbReference type="ChEBI" id="CHEBI:30879"/>
        <dbReference type="ChEBI" id="CHEBI:33308"/>
        <dbReference type="EC" id="3.1.1.1"/>
    </reaction>
</comment>
<comment type="subunit">
    <text>Monomer.</text>
</comment>
<comment type="subcellular location">
    <subcellularLocation>
        <location>Secreted</location>
    </subcellularLocation>
</comment>
<comment type="tissue specificity">
    <text>Specifically expressed in the ejaculatory bulbs of male.</text>
</comment>
<comment type="similarity">
    <text evidence="5">Belongs to the type-B carboxylesterase/lipase family.</text>
</comment>
<comment type="sequence caution" evidence="5">
    <conflict type="erroneous gene model prediction">
        <sequence resource="EMBL-CDS" id="AAM11419"/>
    </conflict>
</comment>
<organism>
    <name type="scientific">Drosophila melanogaster</name>
    <name type="common">Fruit fly</name>
    <dbReference type="NCBI Taxonomy" id="7227"/>
    <lineage>
        <taxon>Eukaryota</taxon>
        <taxon>Metazoa</taxon>
        <taxon>Ecdysozoa</taxon>
        <taxon>Arthropoda</taxon>
        <taxon>Hexapoda</taxon>
        <taxon>Insecta</taxon>
        <taxon>Pterygota</taxon>
        <taxon>Neoptera</taxon>
        <taxon>Endopterygota</taxon>
        <taxon>Diptera</taxon>
        <taxon>Brachycera</taxon>
        <taxon>Muscomorpha</taxon>
        <taxon>Ephydroidea</taxon>
        <taxon>Drosophilidae</taxon>
        <taxon>Drosophila</taxon>
        <taxon>Sophophora</taxon>
    </lineage>
</organism>
<evidence type="ECO:0000250" key="1"/>
<evidence type="ECO:0000255" key="2"/>
<evidence type="ECO:0000255" key="3">
    <source>
        <dbReference type="PROSITE-ProRule" id="PRU10039"/>
    </source>
</evidence>
<evidence type="ECO:0000269" key="4">
    <source>
    </source>
</evidence>
<evidence type="ECO:0000305" key="5"/>
<evidence type="ECO:0007829" key="6">
    <source>
        <dbReference type="PDB" id="5THM"/>
    </source>
</evidence>
<name>EST6_DROME</name>
<dbReference type="EC" id="3.1.1.1"/>
<dbReference type="EMBL" id="M33780">
    <property type="protein sequence ID" value="AAA28519.1"/>
    <property type="molecule type" value="Genomic_DNA"/>
</dbReference>
<dbReference type="EMBL" id="J04167">
    <property type="protein sequence ID" value="AAA28518.1"/>
    <property type="molecule type" value="Genomic_DNA"/>
</dbReference>
<dbReference type="EMBL" id="M15961">
    <property type="protein sequence ID" value="AAA28517.1"/>
    <property type="molecule type" value="mRNA"/>
</dbReference>
<dbReference type="EMBL" id="AF147095">
    <property type="protein sequence ID" value="AAD39958.1"/>
    <property type="molecule type" value="Genomic_DNA"/>
</dbReference>
<dbReference type="EMBL" id="AF147096">
    <property type="protein sequence ID" value="AAD39959.1"/>
    <property type="molecule type" value="Genomic_DNA"/>
</dbReference>
<dbReference type="EMBL" id="AF147097">
    <property type="protein sequence ID" value="AAD39960.1"/>
    <property type="molecule type" value="Genomic_DNA"/>
</dbReference>
<dbReference type="EMBL" id="AF147098">
    <property type="protein sequence ID" value="AAD39961.1"/>
    <property type="molecule type" value="Genomic_DNA"/>
</dbReference>
<dbReference type="EMBL" id="AF147099">
    <property type="protein sequence ID" value="AAD39962.1"/>
    <property type="molecule type" value="Genomic_DNA"/>
</dbReference>
<dbReference type="EMBL" id="AF147100">
    <property type="protein sequence ID" value="AAD39963.1"/>
    <property type="molecule type" value="Genomic_DNA"/>
</dbReference>
<dbReference type="EMBL" id="AF147101">
    <property type="protein sequence ID" value="AAD39964.1"/>
    <property type="molecule type" value="Genomic_DNA"/>
</dbReference>
<dbReference type="EMBL" id="AF147102">
    <property type="protein sequence ID" value="AAD39965.1"/>
    <property type="molecule type" value="Genomic_DNA"/>
</dbReference>
<dbReference type="EMBL" id="AF217624">
    <property type="protein sequence ID" value="AAF61043.1"/>
    <property type="molecule type" value="Genomic_DNA"/>
</dbReference>
<dbReference type="EMBL" id="AF217625">
    <property type="protein sequence ID" value="AAF61044.1"/>
    <property type="molecule type" value="Genomic_DNA"/>
</dbReference>
<dbReference type="EMBL" id="AF217626">
    <property type="protein sequence ID" value="AAF61045.1"/>
    <property type="molecule type" value="Genomic_DNA"/>
</dbReference>
<dbReference type="EMBL" id="AF217627">
    <property type="protein sequence ID" value="AAF61046.1"/>
    <property type="molecule type" value="Genomic_DNA"/>
</dbReference>
<dbReference type="EMBL" id="AF217628">
    <property type="protein sequence ID" value="AAF61047.1"/>
    <property type="molecule type" value="Genomic_DNA"/>
</dbReference>
<dbReference type="EMBL" id="AF217629">
    <property type="protein sequence ID" value="AAF61048.1"/>
    <property type="molecule type" value="Genomic_DNA"/>
</dbReference>
<dbReference type="EMBL" id="AF217630">
    <property type="protein sequence ID" value="AAF61049.1"/>
    <property type="molecule type" value="Genomic_DNA"/>
</dbReference>
<dbReference type="EMBL" id="AF217631">
    <property type="protein sequence ID" value="AAF61050.1"/>
    <property type="molecule type" value="Genomic_DNA"/>
</dbReference>
<dbReference type="EMBL" id="AF217632">
    <property type="protein sequence ID" value="AAF61051.1"/>
    <property type="molecule type" value="Genomic_DNA"/>
</dbReference>
<dbReference type="EMBL" id="AF217633">
    <property type="protein sequence ID" value="AAF61052.1"/>
    <property type="molecule type" value="Genomic_DNA"/>
</dbReference>
<dbReference type="EMBL" id="AF217634">
    <property type="protein sequence ID" value="AAF61053.1"/>
    <property type="molecule type" value="Genomic_DNA"/>
</dbReference>
<dbReference type="EMBL" id="AF217635">
    <property type="protein sequence ID" value="AAF61054.1"/>
    <property type="molecule type" value="Genomic_DNA"/>
</dbReference>
<dbReference type="EMBL" id="AF217636">
    <property type="protein sequence ID" value="AAF61055.1"/>
    <property type="molecule type" value="Genomic_DNA"/>
</dbReference>
<dbReference type="EMBL" id="AF217637">
    <property type="protein sequence ID" value="AAF61056.1"/>
    <property type="molecule type" value="Genomic_DNA"/>
</dbReference>
<dbReference type="EMBL" id="AF217638">
    <property type="protein sequence ID" value="AAF61057.1"/>
    <property type="molecule type" value="Genomic_DNA"/>
</dbReference>
<dbReference type="EMBL" id="AF217639">
    <property type="protein sequence ID" value="AAF61058.1"/>
    <property type="molecule type" value="Genomic_DNA"/>
</dbReference>
<dbReference type="EMBL" id="AF217640">
    <property type="protein sequence ID" value="AAF61059.1"/>
    <property type="molecule type" value="Genomic_DNA"/>
</dbReference>
<dbReference type="EMBL" id="AF217641">
    <property type="protein sequence ID" value="AAF61060.1"/>
    <property type="molecule type" value="Genomic_DNA"/>
</dbReference>
<dbReference type="EMBL" id="AF217642">
    <property type="protein sequence ID" value="AAF61061.1"/>
    <property type="molecule type" value="Genomic_DNA"/>
</dbReference>
<dbReference type="EMBL" id="AF217643">
    <property type="protein sequence ID" value="AAF61062.1"/>
    <property type="molecule type" value="Genomic_DNA"/>
</dbReference>
<dbReference type="EMBL" id="AF217644">
    <property type="protein sequence ID" value="AAF61063.1"/>
    <property type="molecule type" value="Genomic_DNA"/>
</dbReference>
<dbReference type="EMBL" id="AF217645">
    <property type="protein sequence ID" value="AAF61064.1"/>
    <property type="molecule type" value="Genomic_DNA"/>
</dbReference>
<dbReference type="EMBL" id="AY247664">
    <property type="protein sequence ID" value="AAP20953.1"/>
    <property type="molecule type" value="Genomic_DNA"/>
</dbReference>
<dbReference type="EMBL" id="AY247665">
    <property type="protein sequence ID" value="AAP20954.1"/>
    <property type="molecule type" value="Genomic_DNA"/>
</dbReference>
<dbReference type="EMBL" id="AY247666">
    <property type="protein sequence ID" value="AAP20955.1"/>
    <property type="molecule type" value="Genomic_DNA"/>
</dbReference>
<dbReference type="EMBL" id="AY247667">
    <property type="protein sequence ID" value="AAP20956.1"/>
    <property type="molecule type" value="Genomic_DNA"/>
</dbReference>
<dbReference type="EMBL" id="AY247668">
    <property type="protein sequence ID" value="AAP20957.1"/>
    <property type="molecule type" value="Genomic_DNA"/>
</dbReference>
<dbReference type="EMBL" id="AY247669">
    <property type="protein sequence ID" value="AAP20958.1"/>
    <property type="molecule type" value="Genomic_DNA"/>
</dbReference>
<dbReference type="EMBL" id="AY247670">
    <property type="protein sequence ID" value="AAP20959.1"/>
    <property type="molecule type" value="Genomic_DNA"/>
</dbReference>
<dbReference type="EMBL" id="AY247671">
    <property type="protein sequence ID" value="AAP20960.1"/>
    <property type="molecule type" value="Genomic_DNA"/>
</dbReference>
<dbReference type="EMBL" id="AY247672">
    <property type="protein sequence ID" value="AAP20961.1"/>
    <property type="molecule type" value="Genomic_DNA"/>
</dbReference>
<dbReference type="EMBL" id="AY247673">
    <property type="protein sequence ID" value="AAP20962.1"/>
    <property type="molecule type" value="Genomic_DNA"/>
</dbReference>
<dbReference type="EMBL" id="AY247674">
    <property type="protein sequence ID" value="AAP20963.1"/>
    <property type="molecule type" value="Genomic_DNA"/>
</dbReference>
<dbReference type="EMBL" id="AY247675">
    <property type="protein sequence ID" value="AAP20964.1"/>
    <property type="molecule type" value="Genomic_DNA"/>
</dbReference>
<dbReference type="EMBL" id="AY247676">
    <property type="protein sequence ID" value="AAP20965.1"/>
    <property type="molecule type" value="Genomic_DNA"/>
</dbReference>
<dbReference type="EMBL" id="AY247677">
    <property type="protein sequence ID" value="AAP20966.1"/>
    <property type="molecule type" value="Genomic_DNA"/>
</dbReference>
<dbReference type="EMBL" id="AY247678">
    <property type="protein sequence ID" value="AAP20967.1"/>
    <property type="molecule type" value="Genomic_DNA"/>
</dbReference>
<dbReference type="EMBL" id="AY247679">
    <property type="protein sequence ID" value="AAP20968.1"/>
    <property type="molecule type" value="Genomic_DNA"/>
</dbReference>
<dbReference type="EMBL" id="AY247680">
    <property type="protein sequence ID" value="AAP20969.1"/>
    <property type="molecule type" value="Genomic_DNA"/>
</dbReference>
<dbReference type="EMBL" id="AY247681">
    <property type="protein sequence ID" value="AAP20970.1"/>
    <property type="molecule type" value="Genomic_DNA"/>
</dbReference>
<dbReference type="EMBL" id="AY247682">
    <property type="protein sequence ID" value="AAP20971.1"/>
    <property type="molecule type" value="Genomic_DNA"/>
</dbReference>
<dbReference type="EMBL" id="AY247683">
    <property type="protein sequence ID" value="AAP20972.1"/>
    <property type="molecule type" value="Genomic_DNA"/>
</dbReference>
<dbReference type="EMBL" id="AY247684">
    <property type="protein sequence ID" value="AAP20973.1"/>
    <property type="molecule type" value="Genomic_DNA"/>
</dbReference>
<dbReference type="EMBL" id="AY247685">
    <property type="protein sequence ID" value="AAP20974.1"/>
    <property type="molecule type" value="Genomic_DNA"/>
</dbReference>
<dbReference type="EMBL" id="AY247686">
    <property type="protein sequence ID" value="AAP20975.1"/>
    <property type="molecule type" value="Genomic_DNA"/>
</dbReference>
<dbReference type="EMBL" id="AY247687">
    <property type="protein sequence ID" value="AAP20976.1"/>
    <property type="molecule type" value="Genomic_DNA"/>
</dbReference>
<dbReference type="EMBL" id="AY247688">
    <property type="protein sequence ID" value="AAP20977.1"/>
    <property type="molecule type" value="Genomic_DNA"/>
</dbReference>
<dbReference type="EMBL" id="AY247689">
    <property type="protein sequence ID" value="AAP20978.1"/>
    <property type="molecule type" value="Genomic_DNA"/>
</dbReference>
<dbReference type="EMBL" id="AY247690">
    <property type="protein sequence ID" value="AAP20979.1"/>
    <property type="molecule type" value="Genomic_DNA"/>
</dbReference>
<dbReference type="EMBL" id="AY247691">
    <property type="protein sequence ID" value="AAP20980.1"/>
    <property type="molecule type" value="Genomic_DNA"/>
</dbReference>
<dbReference type="EMBL" id="AY247692">
    <property type="protein sequence ID" value="AAP20981.1"/>
    <property type="molecule type" value="Genomic_DNA"/>
</dbReference>
<dbReference type="EMBL" id="AY247693">
    <property type="protein sequence ID" value="AAP20982.1"/>
    <property type="molecule type" value="Genomic_DNA"/>
</dbReference>
<dbReference type="EMBL" id="AY247694">
    <property type="protein sequence ID" value="AAP20983.1"/>
    <property type="molecule type" value="Genomic_DNA"/>
</dbReference>
<dbReference type="EMBL" id="AY247695">
    <property type="protein sequence ID" value="AAP20984.1"/>
    <property type="molecule type" value="Genomic_DNA"/>
</dbReference>
<dbReference type="EMBL" id="AY247696">
    <property type="protein sequence ID" value="AAP20985.1"/>
    <property type="molecule type" value="Genomic_DNA"/>
</dbReference>
<dbReference type="EMBL" id="AY247697">
    <property type="protein sequence ID" value="AAP20986.1"/>
    <property type="molecule type" value="Genomic_DNA"/>
</dbReference>
<dbReference type="EMBL" id="AY247698">
    <property type="protein sequence ID" value="AAP20987.1"/>
    <property type="molecule type" value="Genomic_DNA"/>
</dbReference>
<dbReference type="EMBL" id="AY247699">
    <property type="protein sequence ID" value="AAP20988.1"/>
    <property type="molecule type" value="Genomic_DNA"/>
</dbReference>
<dbReference type="EMBL" id="AY247700">
    <property type="protein sequence ID" value="AAP20989.1"/>
    <property type="molecule type" value="Genomic_DNA"/>
</dbReference>
<dbReference type="EMBL" id="AY247701">
    <property type="protein sequence ID" value="AAP20990.1"/>
    <property type="molecule type" value="Genomic_DNA"/>
</dbReference>
<dbReference type="EMBL" id="AY247702">
    <property type="protein sequence ID" value="AAP20991.1"/>
    <property type="molecule type" value="Genomic_DNA"/>
</dbReference>
<dbReference type="EMBL" id="AY247703">
    <property type="protein sequence ID" value="AAP20992.1"/>
    <property type="molecule type" value="Genomic_DNA"/>
</dbReference>
<dbReference type="EMBL" id="AY247704">
    <property type="protein sequence ID" value="AAP20993.1"/>
    <property type="molecule type" value="Genomic_DNA"/>
</dbReference>
<dbReference type="EMBL" id="AY247705">
    <property type="protein sequence ID" value="AAP20994.1"/>
    <property type="molecule type" value="Genomic_DNA"/>
</dbReference>
<dbReference type="EMBL" id="AY247706">
    <property type="protein sequence ID" value="AAP20995.1"/>
    <property type="molecule type" value="Genomic_DNA"/>
</dbReference>
<dbReference type="EMBL" id="AY247707">
    <property type="protein sequence ID" value="AAP20996.1"/>
    <property type="molecule type" value="Genomic_DNA"/>
</dbReference>
<dbReference type="EMBL" id="AY247708">
    <property type="protein sequence ID" value="AAP20997.1"/>
    <property type="molecule type" value="Genomic_DNA"/>
</dbReference>
<dbReference type="EMBL" id="AY247709">
    <property type="protein sequence ID" value="AAP20998.1"/>
    <property type="molecule type" value="Genomic_DNA"/>
</dbReference>
<dbReference type="EMBL" id="AY247710">
    <property type="protein sequence ID" value="AAP20999.1"/>
    <property type="molecule type" value="Genomic_DNA"/>
</dbReference>
<dbReference type="EMBL" id="AY247711">
    <property type="protein sequence ID" value="AAP21000.1"/>
    <property type="molecule type" value="Genomic_DNA"/>
</dbReference>
<dbReference type="EMBL" id="AY247712">
    <property type="protein sequence ID" value="AAP21001.1"/>
    <property type="molecule type" value="Genomic_DNA"/>
</dbReference>
<dbReference type="EMBL" id="AY247713">
    <property type="protein sequence ID" value="AAP21002.1"/>
    <property type="molecule type" value="Genomic_DNA"/>
</dbReference>
<dbReference type="EMBL" id="AE014296">
    <property type="protein sequence ID" value="AAF49946.1"/>
    <property type="molecule type" value="Genomic_DNA"/>
</dbReference>
<dbReference type="EMBL" id="AY095091">
    <property type="protein sequence ID" value="AAM11419.1"/>
    <property type="status" value="ALT_SEQ"/>
    <property type="molecule type" value="mRNA"/>
</dbReference>
<dbReference type="EMBL" id="U57474">
    <property type="protein sequence ID" value="AAB46692.1"/>
    <property type="molecule type" value="Genomic_DNA"/>
</dbReference>
<dbReference type="EMBL" id="U57475">
    <property type="protein sequence ID" value="AAB46693.1"/>
    <property type="molecule type" value="Genomic_DNA"/>
</dbReference>
<dbReference type="EMBL" id="U57476">
    <property type="protein sequence ID" value="AAB46694.1"/>
    <property type="molecule type" value="Genomic_DNA"/>
</dbReference>
<dbReference type="EMBL" id="U57477">
    <property type="protein sequence ID" value="AAB46695.1"/>
    <property type="molecule type" value="Genomic_DNA"/>
</dbReference>
<dbReference type="EMBL" id="U57478">
    <property type="protein sequence ID" value="AAB46696.1"/>
    <property type="molecule type" value="Genomic_DNA"/>
</dbReference>
<dbReference type="EMBL" id="U57479">
    <property type="protein sequence ID" value="AAB46697.1"/>
    <property type="molecule type" value="Genomic_DNA"/>
</dbReference>
<dbReference type="EMBL" id="U57480">
    <property type="protein sequence ID" value="AAB46698.1"/>
    <property type="molecule type" value="Genomic_DNA"/>
</dbReference>
<dbReference type="EMBL" id="U57481">
    <property type="protein sequence ID" value="AAB46699.1"/>
    <property type="molecule type" value="Genomic_DNA"/>
</dbReference>
<dbReference type="EMBL" id="U57482">
    <property type="protein sequence ID" value="AAB46700.1"/>
    <property type="molecule type" value="Genomic_DNA"/>
</dbReference>
<dbReference type="EMBL" id="U57483">
    <property type="protein sequence ID" value="AAB46701.1"/>
    <property type="molecule type" value="Genomic_DNA"/>
</dbReference>
<dbReference type="EMBL" id="U57484">
    <property type="protein sequence ID" value="AAB46702.1"/>
    <property type="molecule type" value="Genomic_DNA"/>
</dbReference>
<dbReference type="EMBL" id="U57485">
    <property type="protein sequence ID" value="AAB46703.1"/>
    <property type="molecule type" value="Genomic_DNA"/>
</dbReference>
<dbReference type="EMBL" id="U57486">
    <property type="protein sequence ID" value="AAB46704.1"/>
    <property type="molecule type" value="Genomic_DNA"/>
</dbReference>
<dbReference type="EMBL" id="U57487">
    <property type="protein sequence ID" value="AAB46705.1"/>
    <property type="molecule type" value="Genomic_DNA"/>
</dbReference>
<dbReference type="EMBL" id="U57488">
    <property type="protein sequence ID" value="AAB46706.1"/>
    <property type="molecule type" value="Genomic_DNA"/>
</dbReference>
<dbReference type="PIR" id="A28022">
    <property type="entry name" value="A28022"/>
</dbReference>
<dbReference type="PIR" id="A34089">
    <property type="entry name" value="A34089"/>
</dbReference>
<dbReference type="PIR" id="A40122">
    <property type="entry name" value="A40122"/>
</dbReference>
<dbReference type="PIR" id="A41426">
    <property type="entry name" value="A41426"/>
</dbReference>
<dbReference type="PIR" id="B40122">
    <property type="entry name" value="B40122"/>
</dbReference>
<dbReference type="PIR" id="B41426">
    <property type="entry name" value="B41426"/>
</dbReference>
<dbReference type="PIR" id="C41426">
    <property type="entry name" value="C41426"/>
</dbReference>
<dbReference type="PIR" id="D41426">
    <property type="entry name" value="D41426"/>
</dbReference>
<dbReference type="PIR" id="E41426">
    <property type="entry name" value="E41426"/>
</dbReference>
<dbReference type="PIR" id="F41426">
    <property type="entry name" value="F41426"/>
</dbReference>
<dbReference type="PIR" id="G41426">
    <property type="entry name" value="G41426"/>
</dbReference>
<dbReference type="PIR" id="H41426">
    <property type="entry name" value="H41426"/>
</dbReference>
<dbReference type="PIR" id="I41426">
    <property type="entry name" value="I41426"/>
</dbReference>
<dbReference type="RefSeq" id="NP_001261749.1">
    <property type="nucleotide sequence ID" value="NM_001274820.1"/>
</dbReference>
<dbReference type="RefSeq" id="NP_788500.1">
    <property type="nucleotide sequence ID" value="NM_176322.3"/>
</dbReference>
<dbReference type="PDB" id="5THM">
    <property type="method" value="X-ray"/>
    <property type="resolution" value="2.15 A"/>
    <property type="chains" value="A=22-544"/>
</dbReference>
<dbReference type="PDBsum" id="5THM"/>
<dbReference type="SMR" id="P08171"/>
<dbReference type="BioGRID" id="64746">
    <property type="interactions" value="1"/>
</dbReference>
<dbReference type="DIP" id="DIP-21801N"/>
<dbReference type="FunCoup" id="P08171">
    <property type="interactions" value="108"/>
</dbReference>
<dbReference type="IntAct" id="P08171">
    <property type="interactions" value="18"/>
</dbReference>
<dbReference type="STRING" id="7227.FBpp0305575"/>
<dbReference type="ESTHER" id="drome-este6">
    <property type="family name" value="Carb_B_Arthropoda"/>
</dbReference>
<dbReference type="MEROPS" id="S09.947"/>
<dbReference type="GlyCosmos" id="P08171">
    <property type="glycosylation" value="4 sites, No reported glycans"/>
</dbReference>
<dbReference type="GlyGen" id="P08171">
    <property type="glycosylation" value="4 sites"/>
</dbReference>
<dbReference type="iPTMnet" id="P08171"/>
<dbReference type="PaxDb" id="7227-FBpp0305575"/>
<dbReference type="DNASU" id="39392"/>
<dbReference type="EnsemblMetazoa" id="FBtr0076003">
    <property type="protein sequence ID" value="FBpp0075735"/>
    <property type="gene ID" value="FBgn0000592"/>
</dbReference>
<dbReference type="EnsemblMetazoa" id="FBtr0333383">
    <property type="protein sequence ID" value="FBpp0305575"/>
    <property type="gene ID" value="FBgn0000592"/>
</dbReference>
<dbReference type="GeneID" id="39392"/>
<dbReference type="KEGG" id="dme:Dmel_CG6917"/>
<dbReference type="AGR" id="FB:FBgn0000592"/>
<dbReference type="CTD" id="39392"/>
<dbReference type="FlyBase" id="FBgn0000592">
    <property type="gene designation" value="Est-6"/>
</dbReference>
<dbReference type="VEuPathDB" id="VectorBase:FBgn0000592"/>
<dbReference type="eggNOG" id="KOG1516">
    <property type="taxonomic scope" value="Eukaryota"/>
</dbReference>
<dbReference type="GeneTree" id="ENSGT00940000173305"/>
<dbReference type="HOGENOM" id="CLU_006586_13_2_1"/>
<dbReference type="InParanoid" id="P08171"/>
<dbReference type="OMA" id="NGHENFM"/>
<dbReference type="OrthoDB" id="6846267at2759"/>
<dbReference type="PhylomeDB" id="P08171"/>
<dbReference type="BioCyc" id="MetaCyc:MONOMER-20460"/>
<dbReference type="Reactome" id="R-DME-112311">
    <property type="pathway name" value="Neurotransmitter clearance"/>
</dbReference>
<dbReference type="Reactome" id="R-DME-1483191">
    <property type="pathway name" value="Synthesis of PC"/>
</dbReference>
<dbReference type="Reactome" id="R-DME-2022377">
    <property type="pathway name" value="Metabolism of Angiotensinogen to Angiotensins"/>
</dbReference>
<dbReference type="Reactome" id="R-DME-211945">
    <property type="pathway name" value="Phase I - Functionalization of compounds"/>
</dbReference>
<dbReference type="Reactome" id="R-DME-5578768">
    <property type="pathway name" value="Physiological factors"/>
</dbReference>
<dbReference type="Reactome" id="R-DME-8964038">
    <property type="pathway name" value="LDL clearance"/>
</dbReference>
<dbReference type="Reactome" id="R-DME-9749641">
    <property type="pathway name" value="Aspirin ADME"/>
</dbReference>
<dbReference type="SignaLink" id="P08171"/>
<dbReference type="BioGRID-ORCS" id="39392">
    <property type="hits" value="0 hits in 1 CRISPR screen"/>
</dbReference>
<dbReference type="GenomeRNAi" id="39392"/>
<dbReference type="PRO" id="PR:P08171"/>
<dbReference type="Proteomes" id="UP000000803">
    <property type="component" value="Chromosome 3L"/>
</dbReference>
<dbReference type="Bgee" id="FBgn0000592">
    <property type="expression patterns" value="Expressed in epithelial cell in male reproductive gland and 99 other cell types or tissues"/>
</dbReference>
<dbReference type="ExpressionAtlas" id="P08171">
    <property type="expression patterns" value="baseline and differential"/>
</dbReference>
<dbReference type="GO" id="GO:0005576">
    <property type="term" value="C:extracellular region"/>
    <property type="evidence" value="ECO:0000314"/>
    <property type="project" value="FlyBase"/>
</dbReference>
<dbReference type="GO" id="GO:0005615">
    <property type="term" value="C:extracellular space"/>
    <property type="evidence" value="ECO:0007005"/>
    <property type="project" value="FlyBase"/>
</dbReference>
<dbReference type="GO" id="GO:0106435">
    <property type="term" value="F:carboxylesterase activity"/>
    <property type="evidence" value="ECO:0000314"/>
    <property type="project" value="FlyBase"/>
</dbReference>
<dbReference type="GO" id="GO:0017171">
    <property type="term" value="F:serine hydrolase activity"/>
    <property type="evidence" value="ECO:0007005"/>
    <property type="project" value="FlyBase"/>
</dbReference>
<dbReference type="GO" id="GO:0034338">
    <property type="term" value="F:short-chain carboxylesterase activity"/>
    <property type="evidence" value="ECO:0000314"/>
    <property type="project" value="FlyBase"/>
</dbReference>
<dbReference type="GO" id="GO:0007619">
    <property type="term" value="P:courtship behavior"/>
    <property type="evidence" value="ECO:0000315"/>
    <property type="project" value="FlyBase"/>
</dbReference>
<dbReference type="GO" id="GO:0007618">
    <property type="term" value="P:mating"/>
    <property type="evidence" value="ECO:0000304"/>
    <property type="project" value="FlyBase"/>
</dbReference>
<dbReference type="GO" id="GO:0030728">
    <property type="term" value="P:ovulation"/>
    <property type="evidence" value="ECO:0000304"/>
    <property type="project" value="FlyBase"/>
</dbReference>
<dbReference type="GO" id="GO:0042811">
    <property type="term" value="P:pheromone biosynthetic process"/>
    <property type="evidence" value="ECO:0000314"/>
    <property type="project" value="FlyBase"/>
</dbReference>
<dbReference type="GO" id="GO:0046662">
    <property type="term" value="P:regulation of egg-laying behavior"/>
    <property type="evidence" value="ECO:0000304"/>
    <property type="project" value="FlyBase"/>
</dbReference>
<dbReference type="GO" id="GO:0046008">
    <property type="term" value="P:regulation of female receptivity, post-mating"/>
    <property type="evidence" value="ECO:0000304"/>
    <property type="project" value="FlyBase"/>
</dbReference>
<dbReference type="GO" id="GO:1990834">
    <property type="term" value="P:response to odorant"/>
    <property type="evidence" value="ECO:0000314"/>
    <property type="project" value="FlyBase"/>
</dbReference>
<dbReference type="GO" id="GO:0019953">
    <property type="term" value="P:sexual reproduction"/>
    <property type="evidence" value="ECO:0007007"/>
    <property type="project" value="FlyBase"/>
</dbReference>
<dbReference type="GO" id="GO:0046693">
    <property type="term" value="P:sperm storage"/>
    <property type="evidence" value="ECO:0000304"/>
    <property type="project" value="FlyBase"/>
</dbReference>
<dbReference type="CDD" id="cd00312">
    <property type="entry name" value="Esterase_lipase"/>
    <property type="match status" value="1"/>
</dbReference>
<dbReference type="FunFam" id="3.40.50.1820:FF:000378">
    <property type="entry name" value="Carboxylic ester hydrolase"/>
    <property type="match status" value="1"/>
</dbReference>
<dbReference type="Gene3D" id="3.40.50.1820">
    <property type="entry name" value="alpha/beta hydrolase"/>
    <property type="match status" value="1"/>
</dbReference>
<dbReference type="InterPro" id="IPR029058">
    <property type="entry name" value="AB_hydrolase_fold"/>
</dbReference>
<dbReference type="InterPro" id="IPR002018">
    <property type="entry name" value="CarbesteraseB"/>
</dbReference>
<dbReference type="InterPro" id="IPR019826">
    <property type="entry name" value="Carboxylesterase_B_AS"/>
</dbReference>
<dbReference type="InterPro" id="IPR019819">
    <property type="entry name" value="Carboxylesterase_B_CS"/>
</dbReference>
<dbReference type="PANTHER" id="PTHR43142">
    <property type="entry name" value="CARBOXYLIC ESTER HYDROLASE"/>
    <property type="match status" value="1"/>
</dbReference>
<dbReference type="PANTHER" id="PTHR43142:SF1">
    <property type="entry name" value="CARBOXYLIC ESTER HYDROLASE"/>
    <property type="match status" value="1"/>
</dbReference>
<dbReference type="Pfam" id="PF00135">
    <property type="entry name" value="COesterase"/>
    <property type="match status" value="1"/>
</dbReference>
<dbReference type="SUPFAM" id="SSF53474">
    <property type="entry name" value="alpha/beta-Hydrolases"/>
    <property type="match status" value="1"/>
</dbReference>
<dbReference type="PROSITE" id="PS00122">
    <property type="entry name" value="CARBOXYLESTERASE_B_1"/>
    <property type="match status" value="1"/>
</dbReference>
<dbReference type="PROSITE" id="PS00941">
    <property type="entry name" value="CARBOXYLESTERASE_B_2"/>
    <property type="match status" value="1"/>
</dbReference>